<evidence type="ECO:0000255" key="1">
    <source>
        <dbReference type="HAMAP-Rule" id="MF_01346"/>
    </source>
</evidence>
<name>ATPA_ACIAD</name>
<dbReference type="EC" id="7.1.2.2" evidence="1"/>
<dbReference type="EMBL" id="CR543861">
    <property type="protein sequence ID" value="CAG67155.1"/>
    <property type="molecule type" value="Genomic_DNA"/>
</dbReference>
<dbReference type="SMR" id="Q6FFK2"/>
<dbReference type="STRING" id="202950.GCA_001485005_01915"/>
<dbReference type="KEGG" id="aci:ACIAD0185"/>
<dbReference type="eggNOG" id="COG0056">
    <property type="taxonomic scope" value="Bacteria"/>
</dbReference>
<dbReference type="HOGENOM" id="CLU_010091_2_1_6"/>
<dbReference type="Proteomes" id="UP000000430">
    <property type="component" value="Chromosome"/>
</dbReference>
<dbReference type="GO" id="GO:0005886">
    <property type="term" value="C:plasma membrane"/>
    <property type="evidence" value="ECO:0007669"/>
    <property type="project" value="UniProtKB-SubCell"/>
</dbReference>
<dbReference type="GO" id="GO:0045259">
    <property type="term" value="C:proton-transporting ATP synthase complex"/>
    <property type="evidence" value="ECO:0007669"/>
    <property type="project" value="UniProtKB-KW"/>
</dbReference>
<dbReference type="GO" id="GO:0043531">
    <property type="term" value="F:ADP binding"/>
    <property type="evidence" value="ECO:0007669"/>
    <property type="project" value="TreeGrafter"/>
</dbReference>
<dbReference type="GO" id="GO:0005524">
    <property type="term" value="F:ATP binding"/>
    <property type="evidence" value="ECO:0007669"/>
    <property type="project" value="UniProtKB-UniRule"/>
</dbReference>
<dbReference type="GO" id="GO:0046933">
    <property type="term" value="F:proton-transporting ATP synthase activity, rotational mechanism"/>
    <property type="evidence" value="ECO:0007669"/>
    <property type="project" value="UniProtKB-UniRule"/>
</dbReference>
<dbReference type="CDD" id="cd18113">
    <property type="entry name" value="ATP-synt_F1_alpha_C"/>
    <property type="match status" value="1"/>
</dbReference>
<dbReference type="CDD" id="cd18116">
    <property type="entry name" value="ATP-synt_F1_alpha_N"/>
    <property type="match status" value="1"/>
</dbReference>
<dbReference type="CDD" id="cd01132">
    <property type="entry name" value="F1-ATPase_alpha_CD"/>
    <property type="match status" value="1"/>
</dbReference>
<dbReference type="FunFam" id="1.20.150.20:FF:000001">
    <property type="entry name" value="ATP synthase subunit alpha"/>
    <property type="match status" value="1"/>
</dbReference>
<dbReference type="FunFam" id="2.40.30.20:FF:000001">
    <property type="entry name" value="ATP synthase subunit alpha"/>
    <property type="match status" value="1"/>
</dbReference>
<dbReference type="FunFam" id="3.40.50.300:FF:000002">
    <property type="entry name" value="ATP synthase subunit alpha"/>
    <property type="match status" value="1"/>
</dbReference>
<dbReference type="Gene3D" id="2.40.30.20">
    <property type="match status" value="1"/>
</dbReference>
<dbReference type="Gene3D" id="1.20.150.20">
    <property type="entry name" value="ATP synthase alpha/beta chain, C-terminal domain"/>
    <property type="match status" value="1"/>
</dbReference>
<dbReference type="Gene3D" id="3.40.50.300">
    <property type="entry name" value="P-loop containing nucleotide triphosphate hydrolases"/>
    <property type="match status" value="1"/>
</dbReference>
<dbReference type="HAMAP" id="MF_01346">
    <property type="entry name" value="ATP_synth_alpha_bact"/>
    <property type="match status" value="1"/>
</dbReference>
<dbReference type="InterPro" id="IPR023366">
    <property type="entry name" value="ATP_synth_asu-like_sf"/>
</dbReference>
<dbReference type="InterPro" id="IPR000793">
    <property type="entry name" value="ATP_synth_asu_C"/>
</dbReference>
<dbReference type="InterPro" id="IPR038376">
    <property type="entry name" value="ATP_synth_asu_C_sf"/>
</dbReference>
<dbReference type="InterPro" id="IPR033732">
    <property type="entry name" value="ATP_synth_F1_a_nt-bd_dom"/>
</dbReference>
<dbReference type="InterPro" id="IPR005294">
    <property type="entry name" value="ATP_synth_F1_asu"/>
</dbReference>
<dbReference type="InterPro" id="IPR020003">
    <property type="entry name" value="ATPase_a/bsu_AS"/>
</dbReference>
<dbReference type="InterPro" id="IPR004100">
    <property type="entry name" value="ATPase_F1/V1/A1_a/bsu_N"/>
</dbReference>
<dbReference type="InterPro" id="IPR036121">
    <property type="entry name" value="ATPase_F1/V1/A1_a/bsu_N_sf"/>
</dbReference>
<dbReference type="InterPro" id="IPR000194">
    <property type="entry name" value="ATPase_F1/V1/A1_a/bsu_nucl-bd"/>
</dbReference>
<dbReference type="InterPro" id="IPR027417">
    <property type="entry name" value="P-loop_NTPase"/>
</dbReference>
<dbReference type="NCBIfam" id="TIGR00962">
    <property type="entry name" value="atpA"/>
    <property type="match status" value="1"/>
</dbReference>
<dbReference type="NCBIfam" id="NF009884">
    <property type="entry name" value="PRK13343.1"/>
    <property type="match status" value="1"/>
</dbReference>
<dbReference type="PANTHER" id="PTHR48082">
    <property type="entry name" value="ATP SYNTHASE SUBUNIT ALPHA, MITOCHONDRIAL"/>
    <property type="match status" value="1"/>
</dbReference>
<dbReference type="PANTHER" id="PTHR48082:SF2">
    <property type="entry name" value="ATP SYNTHASE SUBUNIT ALPHA, MITOCHONDRIAL"/>
    <property type="match status" value="1"/>
</dbReference>
<dbReference type="Pfam" id="PF00006">
    <property type="entry name" value="ATP-synt_ab"/>
    <property type="match status" value="1"/>
</dbReference>
<dbReference type="Pfam" id="PF00306">
    <property type="entry name" value="ATP-synt_ab_C"/>
    <property type="match status" value="1"/>
</dbReference>
<dbReference type="Pfam" id="PF02874">
    <property type="entry name" value="ATP-synt_ab_N"/>
    <property type="match status" value="1"/>
</dbReference>
<dbReference type="SUPFAM" id="SSF47917">
    <property type="entry name" value="C-terminal domain of alpha and beta subunits of F1 ATP synthase"/>
    <property type="match status" value="1"/>
</dbReference>
<dbReference type="SUPFAM" id="SSF50615">
    <property type="entry name" value="N-terminal domain of alpha and beta subunits of F1 ATP synthase"/>
    <property type="match status" value="1"/>
</dbReference>
<dbReference type="SUPFAM" id="SSF52540">
    <property type="entry name" value="P-loop containing nucleoside triphosphate hydrolases"/>
    <property type="match status" value="1"/>
</dbReference>
<dbReference type="PROSITE" id="PS00152">
    <property type="entry name" value="ATPASE_ALPHA_BETA"/>
    <property type="match status" value="1"/>
</dbReference>
<feature type="chain" id="PRO_0000238185" description="ATP synthase subunit alpha">
    <location>
        <begin position="1"/>
        <end position="519"/>
    </location>
</feature>
<feature type="binding site" evidence="1">
    <location>
        <begin position="175"/>
        <end position="182"/>
    </location>
    <ligand>
        <name>ATP</name>
        <dbReference type="ChEBI" id="CHEBI:30616"/>
    </ligand>
</feature>
<feature type="site" description="Required for activity" evidence="1">
    <location>
        <position position="379"/>
    </location>
</feature>
<accession>Q6FFK2</accession>
<organism>
    <name type="scientific">Acinetobacter baylyi (strain ATCC 33305 / BD413 / ADP1)</name>
    <dbReference type="NCBI Taxonomy" id="62977"/>
    <lineage>
        <taxon>Bacteria</taxon>
        <taxon>Pseudomonadati</taxon>
        <taxon>Pseudomonadota</taxon>
        <taxon>Gammaproteobacteria</taxon>
        <taxon>Moraxellales</taxon>
        <taxon>Moraxellaceae</taxon>
        <taxon>Acinetobacter</taxon>
    </lineage>
</organism>
<proteinExistence type="inferred from homology"/>
<reference key="1">
    <citation type="journal article" date="2004" name="Nucleic Acids Res.">
        <title>Unique features revealed by the genome sequence of Acinetobacter sp. ADP1, a versatile and naturally transformation competent bacterium.</title>
        <authorList>
            <person name="Barbe V."/>
            <person name="Vallenet D."/>
            <person name="Fonknechten N."/>
            <person name="Kreimeyer A."/>
            <person name="Oztas S."/>
            <person name="Labarre L."/>
            <person name="Cruveiller S."/>
            <person name="Robert C."/>
            <person name="Duprat S."/>
            <person name="Wincker P."/>
            <person name="Ornston L.N."/>
            <person name="Weissenbach J."/>
            <person name="Marliere P."/>
            <person name="Cohen G.N."/>
            <person name="Medigue C."/>
        </authorList>
    </citation>
    <scope>NUCLEOTIDE SEQUENCE [LARGE SCALE GENOMIC DNA]</scope>
    <source>
        <strain>ATCC 33305 / BD413 / ADP1</strain>
    </source>
</reference>
<keyword id="KW-0066">ATP synthesis</keyword>
<keyword id="KW-0067">ATP-binding</keyword>
<keyword id="KW-0997">Cell inner membrane</keyword>
<keyword id="KW-1003">Cell membrane</keyword>
<keyword id="KW-0139">CF(1)</keyword>
<keyword id="KW-0375">Hydrogen ion transport</keyword>
<keyword id="KW-0406">Ion transport</keyword>
<keyword id="KW-0472">Membrane</keyword>
<keyword id="KW-0547">Nucleotide-binding</keyword>
<keyword id="KW-1278">Translocase</keyword>
<keyword id="KW-0813">Transport</keyword>
<gene>
    <name evidence="1" type="primary">atpA</name>
    <name type="ordered locus">ACIAD0185</name>
</gene>
<sequence length="519" mass="55999">MRNSAMQQLNPSEISALIKQRIGDLDTSATAKNEGTIVMVSDGIVRIHGLADAMYGEMIEFDGGLFGMALNLEQDSVGAVVLGNYLSLQEGQKARCTGRVLEVPVGPELLGRVVDALGNPIDGKGPIDAKLTDAVEKVAPGVIWRQSVDEPVQTGYKSVDTMIPVGRGQRELIIGDRQTGKTAMAIDAIIAQKHSGIKCVYVAIGQKQSTIANVVRKLEETGAMAYTTVVAAAAADPAAMQYLAPYSGCTMGEYFRDRGEDALIIYDDLSKQAVAYRQISLLLRRPPGREAYPGDVFYLHSRLLERASRVSADYVEKFTNGAVTGQTGSLTALPIIETQAGDVSAFVPTNVISITDGQIFLETSLFNAGIRPAVNAGISVSRVGGSAQTKIIKKLSGGIRTALAQYRELAAFAQFASDLDEATRKQLEHGQRVTELMKQKQYAPYSIADQAVSVYASNEGYMADVEVKKIVDFDAALISYFRSEYAPLMKQIDETGDYNKDIEAAIKSGIESFKATQTY</sequence>
<protein>
    <recommendedName>
        <fullName evidence="1">ATP synthase subunit alpha</fullName>
        <ecNumber evidence="1">7.1.2.2</ecNumber>
    </recommendedName>
    <alternativeName>
        <fullName evidence="1">ATP synthase F1 sector subunit alpha</fullName>
    </alternativeName>
    <alternativeName>
        <fullName evidence="1">F-ATPase subunit alpha</fullName>
    </alternativeName>
</protein>
<comment type="function">
    <text evidence="1">Produces ATP from ADP in the presence of a proton gradient across the membrane. The alpha chain is a regulatory subunit.</text>
</comment>
<comment type="catalytic activity">
    <reaction evidence="1">
        <text>ATP + H2O + 4 H(+)(in) = ADP + phosphate + 5 H(+)(out)</text>
        <dbReference type="Rhea" id="RHEA:57720"/>
        <dbReference type="ChEBI" id="CHEBI:15377"/>
        <dbReference type="ChEBI" id="CHEBI:15378"/>
        <dbReference type="ChEBI" id="CHEBI:30616"/>
        <dbReference type="ChEBI" id="CHEBI:43474"/>
        <dbReference type="ChEBI" id="CHEBI:456216"/>
        <dbReference type="EC" id="7.1.2.2"/>
    </reaction>
</comment>
<comment type="subunit">
    <text evidence="1">F-type ATPases have 2 components, CF(1) - the catalytic core - and CF(0) - the membrane proton channel. CF(1) has five subunits: alpha(3), beta(3), gamma(1), delta(1), epsilon(1). CF(0) has three main subunits: a(1), b(2) and c(9-12). The alpha and beta chains form an alternating ring which encloses part of the gamma chain. CF(1) is attached to CF(0) by a central stalk formed by the gamma and epsilon chains, while a peripheral stalk is formed by the delta and b chains.</text>
</comment>
<comment type="subcellular location">
    <subcellularLocation>
        <location evidence="1">Cell inner membrane</location>
        <topology evidence="1">Peripheral membrane protein</topology>
    </subcellularLocation>
</comment>
<comment type="similarity">
    <text evidence="1">Belongs to the ATPase alpha/beta chains family.</text>
</comment>